<reference key="1">
    <citation type="submission" date="2008-05" db="EMBL/GenBank/DDBJ databases">
        <title>Complete sequence of Chlorobium limicola DSM 245.</title>
        <authorList>
            <consortium name="US DOE Joint Genome Institute"/>
            <person name="Lucas S."/>
            <person name="Copeland A."/>
            <person name="Lapidus A."/>
            <person name="Glavina del Rio T."/>
            <person name="Dalin E."/>
            <person name="Tice H."/>
            <person name="Bruce D."/>
            <person name="Goodwin L."/>
            <person name="Pitluck S."/>
            <person name="Schmutz J."/>
            <person name="Larimer F."/>
            <person name="Land M."/>
            <person name="Hauser L."/>
            <person name="Kyrpides N."/>
            <person name="Ovchinnikova G."/>
            <person name="Zhao F."/>
            <person name="Li T."/>
            <person name="Liu Z."/>
            <person name="Overmann J."/>
            <person name="Bryant D.A."/>
            <person name="Richardson P."/>
        </authorList>
    </citation>
    <scope>NUCLEOTIDE SEQUENCE [LARGE SCALE GENOMIC DNA]</scope>
    <source>
        <strain>DSM 245 / NBRC 103803 / 6330</strain>
    </source>
</reference>
<organism>
    <name type="scientific">Chlorobium limicola (strain DSM 245 / NBRC 103803 / 6330)</name>
    <dbReference type="NCBI Taxonomy" id="290315"/>
    <lineage>
        <taxon>Bacteria</taxon>
        <taxon>Pseudomonadati</taxon>
        <taxon>Chlorobiota</taxon>
        <taxon>Chlorobiia</taxon>
        <taxon>Chlorobiales</taxon>
        <taxon>Chlorobiaceae</taxon>
        <taxon>Chlorobium/Pelodictyon group</taxon>
        <taxon>Chlorobium</taxon>
    </lineage>
</organism>
<name>HIS3_CHLL2</name>
<keyword id="KW-0028">Amino-acid biosynthesis</keyword>
<keyword id="KW-0963">Cytoplasm</keyword>
<keyword id="KW-0368">Histidine biosynthesis</keyword>
<keyword id="KW-0378">Hydrolase</keyword>
<keyword id="KW-0460">Magnesium</keyword>
<keyword id="KW-0479">Metal-binding</keyword>
<keyword id="KW-0862">Zinc</keyword>
<gene>
    <name evidence="1" type="primary">hisI</name>
    <name type="ordered locus">Clim_2012</name>
</gene>
<proteinExistence type="inferred from homology"/>
<dbReference type="EC" id="3.5.4.19" evidence="1"/>
<dbReference type="EMBL" id="CP001097">
    <property type="protein sequence ID" value="ACD91044.1"/>
    <property type="molecule type" value="Genomic_DNA"/>
</dbReference>
<dbReference type="RefSeq" id="WP_012466913.1">
    <property type="nucleotide sequence ID" value="NC_010803.1"/>
</dbReference>
<dbReference type="SMR" id="B3EFT2"/>
<dbReference type="STRING" id="290315.Clim_2012"/>
<dbReference type="KEGG" id="cli:Clim_2012"/>
<dbReference type="eggNOG" id="COG0139">
    <property type="taxonomic scope" value="Bacteria"/>
</dbReference>
<dbReference type="HOGENOM" id="CLU_048577_5_0_10"/>
<dbReference type="OrthoDB" id="9795769at2"/>
<dbReference type="UniPathway" id="UPA00031">
    <property type="reaction ID" value="UER00008"/>
</dbReference>
<dbReference type="Proteomes" id="UP000008841">
    <property type="component" value="Chromosome"/>
</dbReference>
<dbReference type="GO" id="GO:0005737">
    <property type="term" value="C:cytoplasm"/>
    <property type="evidence" value="ECO:0007669"/>
    <property type="project" value="UniProtKB-SubCell"/>
</dbReference>
<dbReference type="GO" id="GO:0000287">
    <property type="term" value="F:magnesium ion binding"/>
    <property type="evidence" value="ECO:0007669"/>
    <property type="project" value="UniProtKB-UniRule"/>
</dbReference>
<dbReference type="GO" id="GO:0004635">
    <property type="term" value="F:phosphoribosyl-AMP cyclohydrolase activity"/>
    <property type="evidence" value="ECO:0007669"/>
    <property type="project" value="UniProtKB-UniRule"/>
</dbReference>
<dbReference type="GO" id="GO:0008270">
    <property type="term" value="F:zinc ion binding"/>
    <property type="evidence" value="ECO:0007669"/>
    <property type="project" value="UniProtKB-UniRule"/>
</dbReference>
<dbReference type="GO" id="GO:0000105">
    <property type="term" value="P:L-histidine biosynthetic process"/>
    <property type="evidence" value="ECO:0007669"/>
    <property type="project" value="UniProtKB-UniRule"/>
</dbReference>
<dbReference type="FunFam" id="3.10.20.810:FF:000001">
    <property type="entry name" value="Histidine biosynthesis bifunctional protein HisIE"/>
    <property type="match status" value="1"/>
</dbReference>
<dbReference type="Gene3D" id="3.10.20.810">
    <property type="entry name" value="Phosphoribosyl-AMP cyclohydrolase"/>
    <property type="match status" value="1"/>
</dbReference>
<dbReference type="HAMAP" id="MF_01021">
    <property type="entry name" value="HisI"/>
    <property type="match status" value="1"/>
</dbReference>
<dbReference type="InterPro" id="IPR026660">
    <property type="entry name" value="PRA-CH"/>
</dbReference>
<dbReference type="InterPro" id="IPR002496">
    <property type="entry name" value="PRib_AMP_CycHydrolase_dom"/>
</dbReference>
<dbReference type="InterPro" id="IPR038019">
    <property type="entry name" value="PRib_AMP_CycHydrolase_sf"/>
</dbReference>
<dbReference type="NCBIfam" id="NF000768">
    <property type="entry name" value="PRK00051.1"/>
    <property type="match status" value="1"/>
</dbReference>
<dbReference type="PANTHER" id="PTHR42945">
    <property type="entry name" value="HISTIDINE BIOSYNTHESIS BIFUNCTIONAL PROTEIN"/>
    <property type="match status" value="1"/>
</dbReference>
<dbReference type="PANTHER" id="PTHR42945:SF1">
    <property type="entry name" value="HISTIDINE BIOSYNTHESIS BIFUNCTIONAL PROTEIN HIS7"/>
    <property type="match status" value="1"/>
</dbReference>
<dbReference type="Pfam" id="PF01502">
    <property type="entry name" value="PRA-CH"/>
    <property type="match status" value="1"/>
</dbReference>
<dbReference type="SUPFAM" id="SSF141734">
    <property type="entry name" value="HisI-like"/>
    <property type="match status" value="1"/>
</dbReference>
<feature type="chain" id="PRO_1000135341" description="Phosphoribosyl-AMP cyclohydrolase">
    <location>
        <begin position="1"/>
        <end position="137"/>
    </location>
</feature>
<feature type="binding site" evidence="1">
    <location>
        <position position="84"/>
    </location>
    <ligand>
        <name>Mg(2+)</name>
        <dbReference type="ChEBI" id="CHEBI:18420"/>
    </ligand>
</feature>
<feature type="binding site" evidence="1">
    <location>
        <position position="85"/>
    </location>
    <ligand>
        <name>Zn(2+)</name>
        <dbReference type="ChEBI" id="CHEBI:29105"/>
        <note>ligand shared between dimeric partners</note>
    </ligand>
</feature>
<feature type="binding site" evidence="1">
    <location>
        <position position="86"/>
    </location>
    <ligand>
        <name>Mg(2+)</name>
        <dbReference type="ChEBI" id="CHEBI:18420"/>
    </ligand>
</feature>
<feature type="binding site" evidence="1">
    <location>
        <position position="88"/>
    </location>
    <ligand>
        <name>Mg(2+)</name>
        <dbReference type="ChEBI" id="CHEBI:18420"/>
    </ligand>
</feature>
<feature type="binding site" evidence="1">
    <location>
        <position position="101"/>
    </location>
    <ligand>
        <name>Zn(2+)</name>
        <dbReference type="ChEBI" id="CHEBI:29105"/>
        <note>ligand shared between dimeric partners</note>
    </ligand>
</feature>
<feature type="binding site" evidence="1">
    <location>
        <position position="108"/>
    </location>
    <ligand>
        <name>Zn(2+)</name>
        <dbReference type="ChEBI" id="CHEBI:29105"/>
        <note>ligand shared between dimeric partners</note>
    </ligand>
</feature>
<comment type="function">
    <text evidence="1">Catalyzes the hydrolysis of the adenine ring of phosphoribosyl-AMP.</text>
</comment>
<comment type="catalytic activity">
    <reaction evidence="1">
        <text>1-(5-phospho-beta-D-ribosyl)-5'-AMP + H2O = 1-(5-phospho-beta-D-ribosyl)-5-[(5-phospho-beta-D-ribosylamino)methylideneamino]imidazole-4-carboxamide</text>
        <dbReference type="Rhea" id="RHEA:20049"/>
        <dbReference type="ChEBI" id="CHEBI:15377"/>
        <dbReference type="ChEBI" id="CHEBI:58435"/>
        <dbReference type="ChEBI" id="CHEBI:59457"/>
        <dbReference type="EC" id="3.5.4.19"/>
    </reaction>
</comment>
<comment type="cofactor">
    <cofactor evidence="1">
        <name>Mg(2+)</name>
        <dbReference type="ChEBI" id="CHEBI:18420"/>
    </cofactor>
    <text evidence="1">Binds 1 Mg(2+) ion per subunit.</text>
</comment>
<comment type="cofactor">
    <cofactor evidence="1">
        <name>Zn(2+)</name>
        <dbReference type="ChEBI" id="CHEBI:29105"/>
    </cofactor>
    <text evidence="1">Binds 1 zinc ion per subunit.</text>
</comment>
<comment type="pathway">
    <text evidence="1">Amino-acid biosynthesis; L-histidine biosynthesis; L-histidine from 5-phospho-alpha-D-ribose 1-diphosphate: step 3/9.</text>
</comment>
<comment type="subunit">
    <text evidence="1">Homodimer.</text>
</comment>
<comment type="subcellular location">
    <subcellularLocation>
        <location evidence="1">Cytoplasm</location>
    </subcellularLocation>
</comment>
<comment type="similarity">
    <text evidence="1">Belongs to the PRA-CH family.</text>
</comment>
<sequence>MSENQDLQQGFLETVKFDEKGLVPAIVQDHETGKVLMMAWMNRESLEMTLERKQACYWSRSRQKLWLKGESSGNMQDVHDILIDCDGDTILLKVSQKGGACHVGYHSCFYRKAKDDLSMEICDTLMFDPEEVYGKKS</sequence>
<protein>
    <recommendedName>
        <fullName evidence="1">Phosphoribosyl-AMP cyclohydrolase</fullName>
        <shortName evidence="1">PRA-CH</shortName>
        <ecNumber evidence="1">3.5.4.19</ecNumber>
    </recommendedName>
</protein>
<accession>B3EFT2</accession>
<evidence type="ECO:0000255" key="1">
    <source>
        <dbReference type="HAMAP-Rule" id="MF_01021"/>
    </source>
</evidence>